<comment type="function">
    <text evidence="1">Represses a number of genes involved in the response to DNA damage (SOS response), including recA and lexA. In the presence of single-stranded DNA, RecA interacts with LexA causing an autocatalytic cleavage which disrupts the DNA-binding part of LexA, leading to derepression of the SOS regulon and eventually DNA repair.</text>
</comment>
<comment type="catalytic activity">
    <reaction evidence="1">
        <text>Hydrolysis of Ala-|-Gly bond in repressor LexA.</text>
        <dbReference type="EC" id="3.4.21.88"/>
    </reaction>
</comment>
<comment type="subunit">
    <text evidence="1">Homodimer.</text>
</comment>
<comment type="similarity">
    <text evidence="1">Belongs to the peptidase S24 family.</text>
</comment>
<evidence type="ECO:0000255" key="1">
    <source>
        <dbReference type="HAMAP-Rule" id="MF_00015"/>
    </source>
</evidence>
<evidence type="ECO:0000256" key="2">
    <source>
        <dbReference type="SAM" id="MobiDB-lite"/>
    </source>
</evidence>
<proteinExistence type="inferred from homology"/>
<accession>Q5LRH4</accession>
<sequence>MLTKKQLDLLEFIHKRLQADGVPPSFDEMKLALDLRSKSGIHRLITALEERGFIRRLAHRARAIEIVKLPESLGGEPTVGFQPRVIDGDRPDRPRPANAEPVTIHAVELPVMGRIAAGVPIEAISQVSHQVAVPGSMVGKGEHYALEVKGDSMIEAGINDGDVVVIRETSTADNGDIVVALVDDSEATLKRFFRRGASIALEAANPAYETRVLPSDRVRVQGRLVGLIRTY</sequence>
<gene>
    <name evidence="1" type="primary">lexA</name>
    <name type="ordered locus">SPO2154</name>
</gene>
<keyword id="KW-0068">Autocatalytic cleavage</keyword>
<keyword id="KW-0227">DNA damage</keyword>
<keyword id="KW-0234">DNA repair</keyword>
<keyword id="KW-0235">DNA replication</keyword>
<keyword id="KW-0238">DNA-binding</keyword>
<keyword id="KW-0378">Hydrolase</keyword>
<keyword id="KW-1185">Reference proteome</keyword>
<keyword id="KW-0678">Repressor</keyword>
<keyword id="KW-0742">SOS response</keyword>
<keyword id="KW-0804">Transcription</keyword>
<keyword id="KW-0805">Transcription regulation</keyword>
<name>LEXA_RUEPO</name>
<feature type="chain" id="PRO_0000170086" description="LexA repressor">
    <location>
        <begin position="1"/>
        <end position="231"/>
    </location>
</feature>
<feature type="DNA-binding region" description="H-T-H motif" evidence="1">
    <location>
        <begin position="26"/>
        <end position="46"/>
    </location>
</feature>
<feature type="region of interest" description="Disordered" evidence="2">
    <location>
        <begin position="79"/>
        <end position="98"/>
    </location>
</feature>
<feature type="compositionally biased region" description="Basic and acidic residues" evidence="2">
    <location>
        <begin position="86"/>
        <end position="95"/>
    </location>
</feature>
<feature type="active site" description="For autocatalytic cleavage activity" evidence="1">
    <location>
        <position position="152"/>
    </location>
</feature>
<feature type="active site" description="For autocatalytic cleavage activity" evidence="1">
    <location>
        <position position="190"/>
    </location>
</feature>
<feature type="site" description="Cleavage; by autolysis" evidence="1">
    <location>
        <begin position="117"/>
        <end position="118"/>
    </location>
</feature>
<reference key="1">
    <citation type="journal article" date="2004" name="Nature">
        <title>Genome sequence of Silicibacter pomeroyi reveals adaptations to the marine environment.</title>
        <authorList>
            <person name="Moran M.A."/>
            <person name="Buchan A."/>
            <person name="Gonzalez J.M."/>
            <person name="Heidelberg J.F."/>
            <person name="Whitman W.B."/>
            <person name="Kiene R.P."/>
            <person name="Henriksen J.R."/>
            <person name="King G.M."/>
            <person name="Belas R."/>
            <person name="Fuqua C."/>
            <person name="Brinkac L.M."/>
            <person name="Lewis M."/>
            <person name="Johri S."/>
            <person name="Weaver B."/>
            <person name="Pai G."/>
            <person name="Eisen J.A."/>
            <person name="Rahe E."/>
            <person name="Sheldon W.M."/>
            <person name="Ye W."/>
            <person name="Miller T.R."/>
            <person name="Carlton J."/>
            <person name="Rasko D.A."/>
            <person name="Paulsen I.T."/>
            <person name="Ren Q."/>
            <person name="Daugherty S.C."/>
            <person name="DeBoy R.T."/>
            <person name="Dodson R.J."/>
            <person name="Durkin A.S."/>
            <person name="Madupu R."/>
            <person name="Nelson W.C."/>
            <person name="Sullivan S.A."/>
            <person name="Rosovitz M.J."/>
            <person name="Haft D.H."/>
            <person name="Selengut J."/>
            <person name="Ward N."/>
        </authorList>
    </citation>
    <scope>NUCLEOTIDE SEQUENCE [LARGE SCALE GENOMIC DNA]</scope>
    <source>
        <strain>ATCC 700808 / DSM 15171 / DSS-3</strain>
    </source>
</reference>
<reference key="2">
    <citation type="journal article" date="2014" name="Stand. Genomic Sci.">
        <title>An updated genome annotation for the model marine bacterium Ruegeria pomeroyi DSS-3.</title>
        <authorList>
            <person name="Rivers A.R."/>
            <person name="Smith C.B."/>
            <person name="Moran M.A."/>
        </authorList>
    </citation>
    <scope>GENOME REANNOTATION</scope>
    <source>
        <strain>ATCC 700808 / DSM 15171 / DSS-3</strain>
    </source>
</reference>
<protein>
    <recommendedName>
        <fullName evidence="1">LexA repressor</fullName>
        <ecNumber evidence="1">3.4.21.88</ecNumber>
    </recommendedName>
</protein>
<organism>
    <name type="scientific">Ruegeria pomeroyi (strain ATCC 700808 / DSM 15171 / DSS-3)</name>
    <name type="common">Silicibacter pomeroyi</name>
    <dbReference type="NCBI Taxonomy" id="246200"/>
    <lineage>
        <taxon>Bacteria</taxon>
        <taxon>Pseudomonadati</taxon>
        <taxon>Pseudomonadota</taxon>
        <taxon>Alphaproteobacteria</taxon>
        <taxon>Rhodobacterales</taxon>
        <taxon>Roseobacteraceae</taxon>
        <taxon>Ruegeria</taxon>
    </lineage>
</organism>
<dbReference type="EC" id="3.4.21.88" evidence="1"/>
<dbReference type="EMBL" id="CP000031">
    <property type="protein sequence ID" value="AAV95422.1"/>
    <property type="molecule type" value="Genomic_DNA"/>
</dbReference>
<dbReference type="RefSeq" id="WP_011047877.1">
    <property type="nucleotide sequence ID" value="NC_003911.12"/>
</dbReference>
<dbReference type="SMR" id="Q5LRH4"/>
<dbReference type="STRING" id="246200.SPO2154"/>
<dbReference type="MEROPS" id="S24.001"/>
<dbReference type="PaxDb" id="246200-SPO2154"/>
<dbReference type="KEGG" id="sil:SPO2154"/>
<dbReference type="eggNOG" id="COG1974">
    <property type="taxonomic scope" value="Bacteria"/>
</dbReference>
<dbReference type="HOGENOM" id="CLU_066192_45_2_5"/>
<dbReference type="OrthoDB" id="9802364at2"/>
<dbReference type="Proteomes" id="UP000001023">
    <property type="component" value="Chromosome"/>
</dbReference>
<dbReference type="GO" id="GO:0003677">
    <property type="term" value="F:DNA binding"/>
    <property type="evidence" value="ECO:0007669"/>
    <property type="project" value="UniProtKB-UniRule"/>
</dbReference>
<dbReference type="GO" id="GO:0004252">
    <property type="term" value="F:serine-type endopeptidase activity"/>
    <property type="evidence" value="ECO:0007669"/>
    <property type="project" value="UniProtKB-UniRule"/>
</dbReference>
<dbReference type="GO" id="GO:0006281">
    <property type="term" value="P:DNA repair"/>
    <property type="evidence" value="ECO:0007669"/>
    <property type="project" value="UniProtKB-UniRule"/>
</dbReference>
<dbReference type="GO" id="GO:0006260">
    <property type="term" value="P:DNA replication"/>
    <property type="evidence" value="ECO:0007669"/>
    <property type="project" value="UniProtKB-UniRule"/>
</dbReference>
<dbReference type="GO" id="GO:0045892">
    <property type="term" value="P:negative regulation of DNA-templated transcription"/>
    <property type="evidence" value="ECO:0007669"/>
    <property type="project" value="UniProtKB-UniRule"/>
</dbReference>
<dbReference type="GO" id="GO:0006508">
    <property type="term" value="P:proteolysis"/>
    <property type="evidence" value="ECO:0007669"/>
    <property type="project" value="InterPro"/>
</dbReference>
<dbReference type="GO" id="GO:0009432">
    <property type="term" value="P:SOS response"/>
    <property type="evidence" value="ECO:0007669"/>
    <property type="project" value="UniProtKB-UniRule"/>
</dbReference>
<dbReference type="CDD" id="cd06529">
    <property type="entry name" value="S24_LexA-like"/>
    <property type="match status" value="1"/>
</dbReference>
<dbReference type="FunFam" id="2.10.109.10:FF:000001">
    <property type="entry name" value="LexA repressor"/>
    <property type="match status" value="1"/>
</dbReference>
<dbReference type="Gene3D" id="2.10.109.10">
    <property type="entry name" value="Umud Fragment, subunit A"/>
    <property type="match status" value="1"/>
</dbReference>
<dbReference type="Gene3D" id="1.10.10.10">
    <property type="entry name" value="Winged helix-like DNA-binding domain superfamily/Winged helix DNA-binding domain"/>
    <property type="match status" value="1"/>
</dbReference>
<dbReference type="HAMAP" id="MF_00015">
    <property type="entry name" value="LexA"/>
    <property type="match status" value="1"/>
</dbReference>
<dbReference type="InterPro" id="IPR006200">
    <property type="entry name" value="LexA"/>
</dbReference>
<dbReference type="InterPro" id="IPR039418">
    <property type="entry name" value="LexA-like"/>
</dbReference>
<dbReference type="InterPro" id="IPR036286">
    <property type="entry name" value="LexA/Signal_pep-like_sf"/>
</dbReference>
<dbReference type="InterPro" id="IPR006199">
    <property type="entry name" value="LexA_DNA-bd_dom"/>
</dbReference>
<dbReference type="InterPro" id="IPR050077">
    <property type="entry name" value="LexA_repressor"/>
</dbReference>
<dbReference type="InterPro" id="IPR006197">
    <property type="entry name" value="Peptidase_S24_LexA"/>
</dbReference>
<dbReference type="InterPro" id="IPR015927">
    <property type="entry name" value="Peptidase_S24_S26A/B/C"/>
</dbReference>
<dbReference type="InterPro" id="IPR036388">
    <property type="entry name" value="WH-like_DNA-bd_sf"/>
</dbReference>
<dbReference type="InterPro" id="IPR036390">
    <property type="entry name" value="WH_DNA-bd_sf"/>
</dbReference>
<dbReference type="NCBIfam" id="TIGR00498">
    <property type="entry name" value="lexA"/>
    <property type="match status" value="1"/>
</dbReference>
<dbReference type="PANTHER" id="PTHR33516">
    <property type="entry name" value="LEXA REPRESSOR"/>
    <property type="match status" value="1"/>
</dbReference>
<dbReference type="PANTHER" id="PTHR33516:SF2">
    <property type="entry name" value="LEXA REPRESSOR-RELATED"/>
    <property type="match status" value="1"/>
</dbReference>
<dbReference type="Pfam" id="PF01726">
    <property type="entry name" value="LexA_DNA_bind"/>
    <property type="match status" value="1"/>
</dbReference>
<dbReference type="Pfam" id="PF00717">
    <property type="entry name" value="Peptidase_S24"/>
    <property type="match status" value="1"/>
</dbReference>
<dbReference type="PRINTS" id="PR00726">
    <property type="entry name" value="LEXASERPTASE"/>
</dbReference>
<dbReference type="SUPFAM" id="SSF51306">
    <property type="entry name" value="LexA/Signal peptidase"/>
    <property type="match status" value="1"/>
</dbReference>
<dbReference type="SUPFAM" id="SSF46785">
    <property type="entry name" value="Winged helix' DNA-binding domain"/>
    <property type="match status" value="1"/>
</dbReference>